<proteinExistence type="evidence at transcript level"/>
<protein>
    <recommendedName>
        <fullName>Zinc finger and BTB domain-containing protein 43</fullName>
    </recommendedName>
    <alternativeName>
        <fullName>Zinc finger protein 297B</fullName>
    </alternativeName>
</protein>
<gene>
    <name type="primary">Zbtb43</name>
    <name type="synonym">Kiaa0414</name>
    <name type="synonym">Zfp297b</name>
    <name type="synonym">Znf297b</name>
</gene>
<name>ZBT43_MOUSE</name>
<organism>
    <name type="scientific">Mus musculus</name>
    <name type="common">Mouse</name>
    <dbReference type="NCBI Taxonomy" id="10090"/>
    <lineage>
        <taxon>Eukaryota</taxon>
        <taxon>Metazoa</taxon>
        <taxon>Chordata</taxon>
        <taxon>Craniata</taxon>
        <taxon>Vertebrata</taxon>
        <taxon>Euteleostomi</taxon>
        <taxon>Mammalia</taxon>
        <taxon>Eutheria</taxon>
        <taxon>Euarchontoglires</taxon>
        <taxon>Glires</taxon>
        <taxon>Rodentia</taxon>
        <taxon>Myomorpha</taxon>
        <taxon>Muroidea</taxon>
        <taxon>Muridae</taxon>
        <taxon>Murinae</taxon>
        <taxon>Mus</taxon>
        <taxon>Mus</taxon>
    </lineage>
</organism>
<comment type="function">
    <text>May be involved in transcriptional regulation.</text>
</comment>
<comment type="subunit">
    <text evidence="1">Interacts with BDP1.</text>
</comment>
<comment type="subcellular location">
    <subcellularLocation>
        <location evidence="6">Nucleus</location>
    </subcellularLocation>
</comment>
<comment type="similarity">
    <text evidence="6">Belongs to the krueppel C2H2-type zinc-finger protein family.</text>
</comment>
<comment type="sequence caution" evidence="6">
    <conflict type="erroneous initiation">
        <sequence resource="EMBL-CDS" id="BAB24254"/>
    </conflict>
</comment>
<comment type="sequence caution" evidence="6">
    <conflict type="erroneous initiation">
        <sequence resource="EMBL-CDS" id="BAC65559"/>
    </conflict>
</comment>
<evidence type="ECO:0000250" key="1"/>
<evidence type="ECO:0000250" key="2">
    <source>
        <dbReference type="UniProtKB" id="O43298"/>
    </source>
</evidence>
<evidence type="ECO:0000255" key="3">
    <source>
        <dbReference type="PROSITE-ProRule" id="PRU00037"/>
    </source>
</evidence>
<evidence type="ECO:0000255" key="4">
    <source>
        <dbReference type="PROSITE-ProRule" id="PRU00042"/>
    </source>
</evidence>
<evidence type="ECO:0000256" key="5">
    <source>
        <dbReference type="SAM" id="MobiDB-lite"/>
    </source>
</evidence>
<evidence type="ECO:0000305" key="6"/>
<accession>Q9DAI4</accession>
<reference key="1">
    <citation type="journal article" date="2005" name="Science">
        <title>The transcriptional landscape of the mammalian genome.</title>
        <authorList>
            <person name="Carninci P."/>
            <person name="Kasukawa T."/>
            <person name="Katayama S."/>
            <person name="Gough J."/>
            <person name="Frith M.C."/>
            <person name="Maeda N."/>
            <person name="Oyama R."/>
            <person name="Ravasi T."/>
            <person name="Lenhard B."/>
            <person name="Wells C."/>
            <person name="Kodzius R."/>
            <person name="Shimokawa K."/>
            <person name="Bajic V.B."/>
            <person name="Brenner S.E."/>
            <person name="Batalov S."/>
            <person name="Forrest A.R."/>
            <person name="Zavolan M."/>
            <person name="Davis M.J."/>
            <person name="Wilming L.G."/>
            <person name="Aidinis V."/>
            <person name="Allen J.E."/>
            <person name="Ambesi-Impiombato A."/>
            <person name="Apweiler R."/>
            <person name="Aturaliya R.N."/>
            <person name="Bailey T.L."/>
            <person name="Bansal M."/>
            <person name="Baxter L."/>
            <person name="Beisel K.W."/>
            <person name="Bersano T."/>
            <person name="Bono H."/>
            <person name="Chalk A.M."/>
            <person name="Chiu K.P."/>
            <person name="Choudhary V."/>
            <person name="Christoffels A."/>
            <person name="Clutterbuck D.R."/>
            <person name="Crowe M.L."/>
            <person name="Dalla E."/>
            <person name="Dalrymple B.P."/>
            <person name="de Bono B."/>
            <person name="Della Gatta G."/>
            <person name="di Bernardo D."/>
            <person name="Down T."/>
            <person name="Engstrom P."/>
            <person name="Fagiolini M."/>
            <person name="Faulkner G."/>
            <person name="Fletcher C.F."/>
            <person name="Fukushima T."/>
            <person name="Furuno M."/>
            <person name="Futaki S."/>
            <person name="Gariboldi M."/>
            <person name="Georgii-Hemming P."/>
            <person name="Gingeras T.R."/>
            <person name="Gojobori T."/>
            <person name="Green R.E."/>
            <person name="Gustincich S."/>
            <person name="Harbers M."/>
            <person name="Hayashi Y."/>
            <person name="Hensch T.K."/>
            <person name="Hirokawa N."/>
            <person name="Hill D."/>
            <person name="Huminiecki L."/>
            <person name="Iacono M."/>
            <person name="Ikeo K."/>
            <person name="Iwama A."/>
            <person name="Ishikawa T."/>
            <person name="Jakt M."/>
            <person name="Kanapin A."/>
            <person name="Katoh M."/>
            <person name="Kawasawa Y."/>
            <person name="Kelso J."/>
            <person name="Kitamura H."/>
            <person name="Kitano H."/>
            <person name="Kollias G."/>
            <person name="Krishnan S.P."/>
            <person name="Kruger A."/>
            <person name="Kummerfeld S.K."/>
            <person name="Kurochkin I.V."/>
            <person name="Lareau L.F."/>
            <person name="Lazarevic D."/>
            <person name="Lipovich L."/>
            <person name="Liu J."/>
            <person name="Liuni S."/>
            <person name="McWilliam S."/>
            <person name="Madan Babu M."/>
            <person name="Madera M."/>
            <person name="Marchionni L."/>
            <person name="Matsuda H."/>
            <person name="Matsuzawa S."/>
            <person name="Miki H."/>
            <person name="Mignone F."/>
            <person name="Miyake S."/>
            <person name="Morris K."/>
            <person name="Mottagui-Tabar S."/>
            <person name="Mulder N."/>
            <person name="Nakano N."/>
            <person name="Nakauchi H."/>
            <person name="Ng P."/>
            <person name="Nilsson R."/>
            <person name="Nishiguchi S."/>
            <person name="Nishikawa S."/>
            <person name="Nori F."/>
            <person name="Ohara O."/>
            <person name="Okazaki Y."/>
            <person name="Orlando V."/>
            <person name="Pang K.C."/>
            <person name="Pavan W.J."/>
            <person name="Pavesi G."/>
            <person name="Pesole G."/>
            <person name="Petrovsky N."/>
            <person name="Piazza S."/>
            <person name="Reed J."/>
            <person name="Reid J.F."/>
            <person name="Ring B.Z."/>
            <person name="Ringwald M."/>
            <person name="Rost B."/>
            <person name="Ruan Y."/>
            <person name="Salzberg S.L."/>
            <person name="Sandelin A."/>
            <person name="Schneider C."/>
            <person name="Schoenbach C."/>
            <person name="Sekiguchi K."/>
            <person name="Semple C.A."/>
            <person name="Seno S."/>
            <person name="Sessa L."/>
            <person name="Sheng Y."/>
            <person name="Shibata Y."/>
            <person name="Shimada H."/>
            <person name="Shimada K."/>
            <person name="Silva D."/>
            <person name="Sinclair B."/>
            <person name="Sperling S."/>
            <person name="Stupka E."/>
            <person name="Sugiura K."/>
            <person name="Sultana R."/>
            <person name="Takenaka Y."/>
            <person name="Taki K."/>
            <person name="Tammoja K."/>
            <person name="Tan S.L."/>
            <person name="Tang S."/>
            <person name="Taylor M.S."/>
            <person name="Tegner J."/>
            <person name="Teichmann S.A."/>
            <person name="Ueda H.R."/>
            <person name="van Nimwegen E."/>
            <person name="Verardo R."/>
            <person name="Wei C.L."/>
            <person name="Yagi K."/>
            <person name="Yamanishi H."/>
            <person name="Zabarovsky E."/>
            <person name="Zhu S."/>
            <person name="Zimmer A."/>
            <person name="Hide W."/>
            <person name="Bult C."/>
            <person name="Grimmond S.M."/>
            <person name="Teasdale R.D."/>
            <person name="Liu E.T."/>
            <person name="Brusic V."/>
            <person name="Quackenbush J."/>
            <person name="Wahlestedt C."/>
            <person name="Mattick J.S."/>
            <person name="Hume D.A."/>
            <person name="Kai C."/>
            <person name="Sasaki D."/>
            <person name="Tomaru Y."/>
            <person name="Fukuda S."/>
            <person name="Kanamori-Katayama M."/>
            <person name="Suzuki M."/>
            <person name="Aoki J."/>
            <person name="Arakawa T."/>
            <person name="Iida J."/>
            <person name="Imamura K."/>
            <person name="Itoh M."/>
            <person name="Kato T."/>
            <person name="Kawaji H."/>
            <person name="Kawagashira N."/>
            <person name="Kawashima T."/>
            <person name="Kojima M."/>
            <person name="Kondo S."/>
            <person name="Konno H."/>
            <person name="Nakano K."/>
            <person name="Ninomiya N."/>
            <person name="Nishio T."/>
            <person name="Okada M."/>
            <person name="Plessy C."/>
            <person name="Shibata K."/>
            <person name="Shiraki T."/>
            <person name="Suzuki S."/>
            <person name="Tagami M."/>
            <person name="Waki K."/>
            <person name="Watahiki A."/>
            <person name="Okamura-Oho Y."/>
            <person name="Suzuki H."/>
            <person name="Kawai J."/>
            <person name="Hayashizaki Y."/>
        </authorList>
    </citation>
    <scope>NUCLEOTIDE SEQUENCE [LARGE SCALE MRNA]</scope>
    <source>
        <strain>C57BL/6J</strain>
        <tissue>Testis</tissue>
    </source>
</reference>
<reference key="2">
    <citation type="journal article" date="2003" name="DNA Res.">
        <title>Prediction of the coding sequences of mouse homologues of KIAA gene: II. The complete nucleotide sequences of 400 mouse KIAA-homologous cDNAs identified by screening of terminal sequences of cDNA clones randomly sampled from size-fractionated libraries.</title>
        <authorList>
            <person name="Okazaki N."/>
            <person name="Kikuno R."/>
            <person name="Ohara R."/>
            <person name="Inamoto S."/>
            <person name="Aizawa H."/>
            <person name="Yuasa S."/>
            <person name="Nakajima D."/>
            <person name="Nagase T."/>
            <person name="Ohara O."/>
            <person name="Koga H."/>
        </authorList>
    </citation>
    <scope>NUCLEOTIDE SEQUENCE [LARGE SCALE MRNA]</scope>
    <source>
        <tissue>Brain</tissue>
    </source>
</reference>
<reference key="3">
    <citation type="journal article" date="2004" name="Genome Res.">
        <title>The status, quality, and expansion of the NIH full-length cDNA project: the Mammalian Gene Collection (MGC).</title>
        <authorList>
            <consortium name="The MGC Project Team"/>
        </authorList>
    </citation>
    <scope>NUCLEOTIDE SEQUENCE [LARGE SCALE MRNA]</scope>
    <source>
        <strain>C57BL/6J</strain>
        <tissue>Brain</tissue>
    </source>
</reference>
<keyword id="KW-0007">Acetylation</keyword>
<keyword id="KW-0238">DNA-binding</keyword>
<keyword id="KW-1017">Isopeptide bond</keyword>
<keyword id="KW-0479">Metal-binding</keyword>
<keyword id="KW-0539">Nucleus</keyword>
<keyword id="KW-0597">Phosphoprotein</keyword>
<keyword id="KW-1185">Reference proteome</keyword>
<keyword id="KW-0677">Repeat</keyword>
<keyword id="KW-0804">Transcription</keyword>
<keyword id="KW-0805">Transcription regulation</keyword>
<keyword id="KW-0832">Ubl conjugation</keyword>
<keyword id="KW-0862">Zinc</keyword>
<keyword id="KW-0863">Zinc-finger</keyword>
<feature type="chain" id="PRO_0000047520" description="Zinc finger and BTB domain-containing protein 43">
    <location>
        <begin position="1"/>
        <end position="467"/>
    </location>
</feature>
<feature type="domain" description="BTB" evidence="3">
    <location>
        <begin position="33"/>
        <end position="97"/>
    </location>
</feature>
<feature type="zinc finger region" description="C2H2-type 1; atypical" evidence="4">
    <location>
        <begin position="373"/>
        <end position="394"/>
    </location>
</feature>
<feature type="zinc finger region" description="C2H2-type 2" evidence="4">
    <location>
        <begin position="400"/>
        <end position="422"/>
    </location>
</feature>
<feature type="zinc finger region" description="C2H2-type 3; atypical" evidence="4">
    <location>
        <begin position="428"/>
        <end position="450"/>
    </location>
</feature>
<feature type="region of interest" description="Disordered" evidence="5">
    <location>
        <begin position="134"/>
        <end position="153"/>
    </location>
</feature>
<feature type="region of interest" description="Disordered" evidence="5">
    <location>
        <begin position="162"/>
        <end position="227"/>
    </location>
</feature>
<feature type="compositionally biased region" description="Polar residues" evidence="5">
    <location>
        <begin position="140"/>
        <end position="149"/>
    </location>
</feature>
<feature type="compositionally biased region" description="Basic and acidic residues" evidence="5">
    <location>
        <begin position="164"/>
        <end position="174"/>
    </location>
</feature>
<feature type="compositionally biased region" description="Basic and acidic residues" evidence="5">
    <location>
        <begin position="182"/>
        <end position="194"/>
    </location>
</feature>
<feature type="modified residue" description="N-acetylmethionine" evidence="2">
    <location>
        <position position="1"/>
    </location>
</feature>
<feature type="modified residue" description="Phosphothreonine" evidence="2">
    <location>
        <position position="423"/>
    </location>
</feature>
<feature type="cross-link" description="Glycyl lysine isopeptide (Lys-Gly) (interchain with G-Cter in SUMO2)" evidence="2">
    <location>
        <position position="182"/>
    </location>
</feature>
<feature type="cross-link" description="Glycyl lysine isopeptide (Lys-Gly) (interchain with G-Cter in SUMO2)" evidence="2">
    <location>
        <position position="247"/>
    </location>
</feature>
<feature type="cross-link" description="Glycyl lysine isopeptide (Lys-Gly) (interchain with G-Cter in SUMO2)" evidence="2">
    <location>
        <position position="297"/>
    </location>
</feature>
<feature type="cross-link" description="Glycyl lysine isopeptide (Lys-Gly) (interchain with G-Cter in SUMO2)" evidence="2">
    <location>
        <position position="358"/>
    </location>
</feature>
<feature type="cross-link" description="Glycyl lysine isopeptide (Lys-Gly) (interchain with G-Cter in SUMO2)" evidence="2">
    <location>
        <position position="458"/>
    </location>
</feature>
<feature type="sequence conflict" description="In Ref. 1; BAB24254." evidence="6" ref="1">
    <original>M</original>
    <variation>T</variation>
    <location>
        <position position="258"/>
    </location>
</feature>
<dbReference type="EMBL" id="AK005818">
    <property type="protein sequence ID" value="BAB24254.2"/>
    <property type="status" value="ALT_INIT"/>
    <property type="molecule type" value="mRNA"/>
</dbReference>
<dbReference type="EMBL" id="AK122277">
    <property type="protein sequence ID" value="BAC65559.1"/>
    <property type="status" value="ALT_INIT"/>
    <property type="molecule type" value="mRNA"/>
</dbReference>
<dbReference type="EMBL" id="BC043117">
    <property type="protein sequence ID" value="AAH43117.1"/>
    <property type="molecule type" value="mRNA"/>
</dbReference>
<dbReference type="CCDS" id="CCDS15943.1"/>
<dbReference type="RefSeq" id="NP_001020765.1">
    <property type="nucleotide sequence ID" value="NM_001025594.1"/>
</dbReference>
<dbReference type="RefSeq" id="NP_001342540.1">
    <property type="nucleotide sequence ID" value="NM_001355611.1"/>
</dbReference>
<dbReference type="RefSeq" id="NP_001342541.1">
    <property type="nucleotide sequence ID" value="NM_001355612.1"/>
</dbReference>
<dbReference type="RefSeq" id="NP_082223.2">
    <property type="nucleotide sequence ID" value="NM_027947.2"/>
</dbReference>
<dbReference type="RefSeq" id="XP_006498411.1">
    <property type="nucleotide sequence ID" value="XM_006498348.3"/>
</dbReference>
<dbReference type="RefSeq" id="XP_006498412.1">
    <property type="nucleotide sequence ID" value="XM_006498349.4"/>
</dbReference>
<dbReference type="SMR" id="Q9DAI4"/>
<dbReference type="BioGRID" id="214963">
    <property type="interactions" value="9"/>
</dbReference>
<dbReference type="FunCoup" id="Q9DAI4">
    <property type="interactions" value="1601"/>
</dbReference>
<dbReference type="IntAct" id="Q9DAI4">
    <property type="interactions" value="2"/>
</dbReference>
<dbReference type="STRING" id="10090.ENSMUSP00000092645"/>
<dbReference type="PhosphoSitePlus" id="Q9DAI4"/>
<dbReference type="jPOST" id="Q9DAI4"/>
<dbReference type="PaxDb" id="10090-ENSMUSP00000028125"/>
<dbReference type="ProteomicsDB" id="298494"/>
<dbReference type="Antibodypedia" id="16550">
    <property type="antibodies" value="130 antibodies from 17 providers"/>
</dbReference>
<dbReference type="DNASU" id="71834"/>
<dbReference type="Ensembl" id="ENSMUST00000028125.12">
    <property type="protein sequence ID" value="ENSMUSP00000028125.6"/>
    <property type="gene ID" value="ENSMUSG00000026788.14"/>
</dbReference>
<dbReference type="GeneID" id="71834"/>
<dbReference type="KEGG" id="mmu:71834"/>
<dbReference type="UCSC" id="uc008jhw.1">
    <property type="organism name" value="mouse"/>
</dbReference>
<dbReference type="AGR" id="MGI:1919084"/>
<dbReference type="CTD" id="23099"/>
<dbReference type="MGI" id="MGI:1919084">
    <property type="gene designation" value="Zbtb43"/>
</dbReference>
<dbReference type="VEuPathDB" id="HostDB:ENSMUSG00000026788"/>
<dbReference type="eggNOG" id="KOG1721">
    <property type="taxonomic scope" value="Eukaryota"/>
</dbReference>
<dbReference type="GeneTree" id="ENSGT00940000160616"/>
<dbReference type="HOGENOM" id="CLU_029118_2_0_1"/>
<dbReference type="InParanoid" id="Q9DAI4"/>
<dbReference type="OrthoDB" id="8117402at2759"/>
<dbReference type="PhylomeDB" id="Q9DAI4"/>
<dbReference type="TreeFam" id="TF333162"/>
<dbReference type="BioGRID-ORCS" id="71834">
    <property type="hits" value="3 hits in 78 CRISPR screens"/>
</dbReference>
<dbReference type="ChiTaRS" id="Zbtb43">
    <property type="organism name" value="mouse"/>
</dbReference>
<dbReference type="PRO" id="PR:Q9DAI4"/>
<dbReference type="Proteomes" id="UP000000589">
    <property type="component" value="Chromosome 2"/>
</dbReference>
<dbReference type="RNAct" id="Q9DAI4">
    <property type="molecule type" value="protein"/>
</dbReference>
<dbReference type="Bgee" id="ENSMUSG00000026788">
    <property type="expression patterns" value="Expressed in otolith organ and 225 other cell types or tissues"/>
</dbReference>
<dbReference type="ExpressionAtlas" id="Q9DAI4">
    <property type="expression patterns" value="baseline and differential"/>
</dbReference>
<dbReference type="GO" id="GO:0005634">
    <property type="term" value="C:nucleus"/>
    <property type="evidence" value="ECO:0007669"/>
    <property type="project" value="UniProtKB-SubCell"/>
</dbReference>
<dbReference type="GO" id="GO:0001025">
    <property type="term" value="F:RNA polymerase III general transcription initiation factor binding"/>
    <property type="evidence" value="ECO:0007669"/>
    <property type="project" value="Ensembl"/>
</dbReference>
<dbReference type="GO" id="GO:1990837">
    <property type="term" value="F:sequence-specific double-stranded DNA binding"/>
    <property type="evidence" value="ECO:0007669"/>
    <property type="project" value="Ensembl"/>
</dbReference>
<dbReference type="GO" id="GO:0008270">
    <property type="term" value="F:zinc ion binding"/>
    <property type="evidence" value="ECO:0007669"/>
    <property type="project" value="UniProtKB-KW"/>
</dbReference>
<dbReference type="CDD" id="cd18227">
    <property type="entry name" value="BTB_POZ_ZBTB43"/>
    <property type="match status" value="1"/>
</dbReference>
<dbReference type="FunFam" id="3.30.710.10:FF:000009">
    <property type="entry name" value="Zinc finger and BTB domain-containing 37"/>
    <property type="match status" value="1"/>
</dbReference>
<dbReference type="FunFam" id="3.30.160.60:FF:000808">
    <property type="entry name" value="Zinc finger and BTB domain-containing protein 43"/>
    <property type="match status" value="1"/>
</dbReference>
<dbReference type="Gene3D" id="3.30.160.60">
    <property type="entry name" value="Classic Zinc Finger"/>
    <property type="match status" value="1"/>
</dbReference>
<dbReference type="Gene3D" id="3.30.710.10">
    <property type="entry name" value="Potassium Channel Kv1.1, Chain A"/>
    <property type="match status" value="1"/>
</dbReference>
<dbReference type="InterPro" id="IPR000210">
    <property type="entry name" value="BTB/POZ_dom"/>
</dbReference>
<dbReference type="InterPro" id="IPR011333">
    <property type="entry name" value="SKP1/BTB/POZ_sf"/>
</dbReference>
<dbReference type="InterPro" id="IPR036236">
    <property type="entry name" value="Znf_C2H2_sf"/>
</dbReference>
<dbReference type="InterPro" id="IPR013087">
    <property type="entry name" value="Znf_C2H2_type"/>
</dbReference>
<dbReference type="InterPro" id="IPR050457">
    <property type="entry name" value="ZnFinger_BTB_dom_contain"/>
</dbReference>
<dbReference type="PANTHER" id="PTHR46105">
    <property type="entry name" value="AGAP004733-PA"/>
    <property type="match status" value="1"/>
</dbReference>
<dbReference type="PANTHER" id="PTHR46105:SF15">
    <property type="entry name" value="ZINC FINGER AND BTB DOMAIN-CONTAINING PROTEIN 43"/>
    <property type="match status" value="1"/>
</dbReference>
<dbReference type="Pfam" id="PF00651">
    <property type="entry name" value="BTB"/>
    <property type="match status" value="1"/>
</dbReference>
<dbReference type="Pfam" id="PF00096">
    <property type="entry name" value="zf-C2H2"/>
    <property type="match status" value="1"/>
</dbReference>
<dbReference type="SMART" id="SM00225">
    <property type="entry name" value="BTB"/>
    <property type="match status" value="1"/>
</dbReference>
<dbReference type="SMART" id="SM00355">
    <property type="entry name" value="ZnF_C2H2"/>
    <property type="match status" value="3"/>
</dbReference>
<dbReference type="SUPFAM" id="SSF57667">
    <property type="entry name" value="beta-beta-alpha zinc fingers"/>
    <property type="match status" value="2"/>
</dbReference>
<dbReference type="SUPFAM" id="SSF54695">
    <property type="entry name" value="POZ domain"/>
    <property type="match status" value="1"/>
</dbReference>
<dbReference type="PROSITE" id="PS50097">
    <property type="entry name" value="BTB"/>
    <property type="match status" value="1"/>
</dbReference>
<dbReference type="PROSITE" id="PS00028">
    <property type="entry name" value="ZINC_FINGER_C2H2_1"/>
    <property type="match status" value="1"/>
</dbReference>
<dbReference type="PROSITE" id="PS50157">
    <property type="entry name" value="ZINC_FINGER_C2H2_2"/>
    <property type="match status" value="3"/>
</dbReference>
<sequence>MEPGTNSFQVEFPDFSSTILQKLNQQRQQGQLCDVSIVVQGHIFQAHKAVLAASSPYFCDQVLLKNSRRIVLPDVMNPRVFENILLFSYTGRLVMPAPEIVSYLTAASFLQMWHVVDKCTEVLEGNPTVLCQKLNHGSDHQSPSSSNYNGLVESFELGSGGHTDFPKAQELRDGENEEESTKDELSSQVTEHEYLPSNSSTEHDRLSTEMASQDGEEGTNDSTEFHYTRPLYSKPSIMAHRRWIHVKPERLEQAWDGMDVHAAYDEHQVTESVNTMQTDHSAQPSGAEEEFQIVEKKVEVEFDEQAEGSSYDEQVDFYGSSMEEFSGEKLGGNLIGHKQEAALAAGYSENIEMAMGIKEEASHLGFSATDKLYPCQCGKSFTHKSQRDRHMSMHLGLRPYGCSVCGKKFKMKHHLVGHMKIHTGIKPYECNICAKRFMWRDSFHRHVTSCTKSYEAAKAEQNTTEAN</sequence>